<sequence>MKLPIYLDYSATTPVDPRVAEKMMQFMTMDGTFGNPASRSHRFGWQAEEAVDIARNQIADLVGADPREIVFTSGATESDNLAIKGAANFYQKKGKHIITSKTEHKAVLDTCRQLEREGFEVTYLAPQRNGIIDLKELEAAMRDDTILVSIMHVNNEIGVVQDIAAIGEMCRARGIIYHVDATQSVGKLPIDLSQLKVDLMSFSGHKIYGPKGIGALYVRRKPRVRIEAQMHGGGHERGMRSGTLPVHQIVGMGEAYRIAKEEMATEMERLRGLRNRLWNGIKDIEEVYLNGDLEHGAPNILNVSFNYVEGESLIMALKDLAVSSGSACTSASLEPSYVLRALGLNDELAHSSIRFSLGRFTTEEEIDYTIELVRKSIGRLRDLSPLWEMYKQGVDLNSIEWAHH</sequence>
<proteinExistence type="evidence at protein level"/>
<gene>
    <name evidence="1" type="primary">iscS</name>
    <name type="ordered locus">Z3797</name>
    <name type="ordered locus">ECs3396</name>
</gene>
<reference key="1">
    <citation type="journal article" date="2001" name="Nature">
        <title>Genome sequence of enterohaemorrhagic Escherichia coli O157:H7.</title>
        <authorList>
            <person name="Perna N.T."/>
            <person name="Plunkett G. III"/>
            <person name="Burland V."/>
            <person name="Mau B."/>
            <person name="Glasner J.D."/>
            <person name="Rose D.J."/>
            <person name="Mayhew G.F."/>
            <person name="Evans P.S."/>
            <person name="Gregor J."/>
            <person name="Kirkpatrick H.A."/>
            <person name="Posfai G."/>
            <person name="Hackett J."/>
            <person name="Klink S."/>
            <person name="Boutin A."/>
            <person name="Shao Y."/>
            <person name="Miller L."/>
            <person name="Grotbeck E.J."/>
            <person name="Davis N.W."/>
            <person name="Lim A."/>
            <person name="Dimalanta E.T."/>
            <person name="Potamousis K."/>
            <person name="Apodaca J."/>
            <person name="Anantharaman T.S."/>
            <person name="Lin J."/>
            <person name="Yen G."/>
            <person name="Schwartz D.C."/>
            <person name="Welch R.A."/>
            <person name="Blattner F.R."/>
        </authorList>
    </citation>
    <scope>NUCLEOTIDE SEQUENCE [LARGE SCALE GENOMIC DNA]</scope>
    <source>
        <strain>O157:H7 / EDL933 / ATCC 700927 / EHEC</strain>
    </source>
</reference>
<reference key="2">
    <citation type="journal article" date="2001" name="DNA Res.">
        <title>Complete genome sequence of enterohemorrhagic Escherichia coli O157:H7 and genomic comparison with a laboratory strain K-12.</title>
        <authorList>
            <person name="Hayashi T."/>
            <person name="Makino K."/>
            <person name="Ohnishi M."/>
            <person name="Kurokawa K."/>
            <person name="Ishii K."/>
            <person name="Yokoyama K."/>
            <person name="Han C.-G."/>
            <person name="Ohtsubo E."/>
            <person name="Nakayama K."/>
            <person name="Murata T."/>
            <person name="Tanaka M."/>
            <person name="Tobe T."/>
            <person name="Iida T."/>
            <person name="Takami H."/>
            <person name="Honda T."/>
            <person name="Sasakawa C."/>
            <person name="Ogasawara N."/>
            <person name="Yasunaga T."/>
            <person name="Kuhara S."/>
            <person name="Shiba T."/>
            <person name="Hattori M."/>
            <person name="Shinagawa H."/>
        </authorList>
    </citation>
    <scope>NUCLEOTIDE SEQUENCE [LARGE SCALE GENOMIC DNA]</scope>
    <source>
        <strain>O157:H7 / Sakai / RIMD 0509952 / EHEC</strain>
    </source>
</reference>
<reference key="3">
    <citation type="journal article" date="2010" name="PLoS Biol.">
        <title>Structural basis for Fe-S cluster assembly and tRNA thiolation mediated by IscS protein-protein interactions.</title>
        <authorList>
            <person name="Shi R."/>
            <person name="Proteau A."/>
            <person name="Villarroya M."/>
            <person name="Moukadiri I."/>
            <person name="Zhang L."/>
            <person name="Trempe J.F."/>
            <person name="Matte A."/>
            <person name="Armengod M.E."/>
            <person name="Cygler M."/>
        </authorList>
    </citation>
    <scope>X-RAY CRYSTALLOGRAPHY (2.05 ANGSTROMS) IN COMPLEX WITH TUSA OR APO-ISCU AND PYRIDOXAL PHOSPHATE</scope>
    <scope>FUNCTION</scope>
    <scope>INTERACTION WITH CYAY; ISCU; ISCX; THII AND TUSA</scope>
    <scope>SUBUNIT</scope>
    <scope>COFACTOR</scope>
    <scope>PYRIDOXAL PHOSPHATE AT LYS-206</scope>
    <scope>PATHWAY</scope>
    <scope>MUTAGENESIS OF ARG-39; TRP-45; GLU-49; ASP-52; ASP-65; PHE-89; ARG-112; ARG-116; ARG-220; ARG-223; 223-ARG--ARG-225; 225-ARG--GLU-227; GLY-234; 237-ARG--MET-239; GLU-311; ALA-327; CYS-328 AND ARG-340</scope>
    <source>
        <strain>O157:H7 / EDL933 / ATCC 700927 / EHEC</strain>
    </source>
</reference>
<name>ISCS_ECO57</name>
<accession>P0A6B9</accession>
<accession>P39171</accession>
<accession>P76581</accession>
<accession>P76992</accession>
<accession>Q8XA86</accession>
<organism>
    <name type="scientific">Escherichia coli O157:H7</name>
    <dbReference type="NCBI Taxonomy" id="83334"/>
    <lineage>
        <taxon>Bacteria</taxon>
        <taxon>Pseudomonadati</taxon>
        <taxon>Pseudomonadota</taxon>
        <taxon>Gammaproteobacteria</taxon>
        <taxon>Enterobacterales</taxon>
        <taxon>Enterobacteriaceae</taxon>
        <taxon>Escherichia</taxon>
    </lineage>
</organism>
<keyword id="KW-0001">2Fe-2S</keyword>
<keyword id="KW-0002">3D-structure</keyword>
<keyword id="KW-0963">Cytoplasm</keyword>
<keyword id="KW-0408">Iron</keyword>
<keyword id="KW-0411">Iron-sulfur</keyword>
<keyword id="KW-0479">Metal-binding</keyword>
<keyword id="KW-0663">Pyridoxal phosphate</keyword>
<keyword id="KW-1185">Reference proteome</keyword>
<keyword id="KW-0808">Transferase</keyword>
<keyword id="KW-0819">tRNA processing</keyword>
<evidence type="ECO:0000255" key="1">
    <source>
        <dbReference type="HAMAP-Rule" id="MF_00331"/>
    </source>
</evidence>
<evidence type="ECO:0000269" key="2">
    <source>
    </source>
</evidence>
<evidence type="ECO:0000303" key="3">
    <source>
    </source>
</evidence>
<evidence type="ECO:0000305" key="4"/>
<evidence type="ECO:0000305" key="5">
    <source>
    </source>
</evidence>
<evidence type="ECO:0007829" key="6">
    <source>
        <dbReference type="PDB" id="3LVJ"/>
    </source>
</evidence>
<evidence type="ECO:0007829" key="7">
    <source>
        <dbReference type="PDB" id="3LVL"/>
    </source>
</evidence>
<evidence type="ECO:0007829" key="8">
    <source>
        <dbReference type="PDB" id="3LVM"/>
    </source>
</evidence>
<comment type="function">
    <text evidence="2">Master enzyme that delivers sulfur to a number of partners involved in Fe-S cluster assembly, tRNA modification or cofactor biosynthesis (biotin, thiamine, molybdopterin). Catalyzes the removal of elemental sulfur and selenium atoms from cysteine and selenocysteine to produce alanine, then delivers the sulfur to an acceptor protein such as CyaY, IscU, IscX, MoaD/MoeB, ThiI, or TusA. Transfers sulfur to acceptor proteins via a transpersulfidation reaction; the flexibility of the persulfide sulfur-carrying Cys-328 allows it to reach different partners docked on the homodimer surface. May function as a selenium delivery protein in the pathway for the biosynthesis of selenophosphate.</text>
</comment>
<comment type="catalytic activity">
    <reaction evidence="1">
        <text>(sulfur carrier)-H + L-cysteine = (sulfur carrier)-SH + L-alanine</text>
        <dbReference type="Rhea" id="RHEA:43892"/>
        <dbReference type="Rhea" id="RHEA-COMP:14737"/>
        <dbReference type="Rhea" id="RHEA-COMP:14739"/>
        <dbReference type="ChEBI" id="CHEBI:29917"/>
        <dbReference type="ChEBI" id="CHEBI:35235"/>
        <dbReference type="ChEBI" id="CHEBI:57972"/>
        <dbReference type="ChEBI" id="CHEBI:64428"/>
        <dbReference type="EC" id="2.8.1.7"/>
    </reaction>
</comment>
<comment type="cofactor">
    <cofactor evidence="1 2">
        <name>pyridoxal 5'-phosphate</name>
        <dbReference type="ChEBI" id="CHEBI:597326"/>
    </cofactor>
</comment>
<comment type="pathway">
    <text evidence="1 5">Cofactor biosynthesis; iron-sulfur cluster biosynthesis.</text>
</comment>
<comment type="subunit">
    <text evidence="2">Homodimer. The homodimer interacts with CyaY, IscU, IscX, ThiI and TusA via an extended surface across both subunits centered around Cys-328. The binding sites for different partners do not necessarily overlap. Certain pairs of proteins can bind simultaneously to IscS; IscS-IscU-CyaY and IscS-IscU-IscX complexes can be isolated in vitro, but others (IscS-IscU-TusA, IscS-TusA-CyaY or IscS-IscX-TusA) complexes cannot.</text>
</comment>
<comment type="interaction">
    <interactant intactId="EBI-9011195">
        <id>P0A6B9</id>
    </interactant>
    <interactant intactId="EBI-15850020">
        <id>Q8XAP0</id>
        <label>cyaY</label>
    </interactant>
    <organismsDiffer>false</organismsDiffer>
    <experiments>2</experiments>
</comment>
<comment type="interaction">
    <interactant intactId="EBI-9011195">
        <id>P0A6B9</id>
    </interactant>
    <interactant intactId="EBI-9011202">
        <id>P0ACD6</id>
        <label>iscU</label>
    </interactant>
    <organismsDiffer>false</organismsDiffer>
    <experiments>5</experiments>
</comment>
<comment type="interaction">
    <interactant intactId="EBI-9011195">
        <id>P0A6B9</id>
    </interactant>
    <interactant intactId="EBI-15849987">
        <id>P0C0M0</id>
        <label>iscX</label>
    </interactant>
    <organismsDiffer>false</organismsDiffer>
    <experiments>2</experiments>
</comment>
<comment type="interaction">
    <interactant intactId="EBI-9011195">
        <id>P0A6B9</id>
    </interactant>
    <interactant intactId="EBI-15849930">
        <id>P0A892</id>
        <label>tusA</label>
    </interactant>
    <organismsDiffer>false</organismsDiffer>
    <experiments>5</experiments>
</comment>
<comment type="subcellular location">
    <subcellularLocation>
        <location evidence="1 4">Cytoplasm</location>
    </subcellularLocation>
</comment>
<comment type="similarity">
    <text evidence="1">Belongs to the class-V pyridoxal-phosphate-dependent aminotransferase family. NifS/IscS subfamily.</text>
</comment>
<comment type="sequence caution" evidence="4">
    <conflict type="erroneous initiation">
        <sequence resource="EMBL-CDS" id="AAG57644"/>
    </conflict>
    <text>Extended N-terminus.</text>
</comment>
<feature type="chain" id="PRO_0000150265" description="Cysteine desulfurase IscS">
    <location>
        <begin position="1"/>
        <end position="404"/>
    </location>
</feature>
<feature type="active site" description="Cysteine persulfide intermediate" evidence="1">
    <location>
        <position position="328"/>
    </location>
</feature>
<feature type="binding site" evidence="1 2">
    <location>
        <begin position="75"/>
        <end position="76"/>
    </location>
    <ligand>
        <name>pyridoxal 5'-phosphate</name>
        <dbReference type="ChEBI" id="CHEBI:597326"/>
    </ligand>
</feature>
<feature type="binding site" evidence="1">
    <location>
        <position position="155"/>
    </location>
    <ligand>
        <name>pyridoxal 5'-phosphate</name>
        <dbReference type="ChEBI" id="CHEBI:597326"/>
    </ligand>
</feature>
<feature type="binding site" evidence="1 2">
    <location>
        <position position="183"/>
    </location>
    <ligand>
        <name>pyridoxal 5'-phosphate</name>
        <dbReference type="ChEBI" id="CHEBI:597326"/>
    </ligand>
</feature>
<feature type="binding site" evidence="1 2">
    <location>
        <begin position="203"/>
        <end position="205"/>
    </location>
    <ligand>
        <name>pyridoxal 5'-phosphate</name>
        <dbReference type="ChEBI" id="CHEBI:597326"/>
    </ligand>
</feature>
<feature type="binding site" evidence="1 2">
    <location>
        <position position="243"/>
    </location>
    <ligand>
        <name>pyridoxal 5'-phosphate</name>
        <dbReference type="ChEBI" id="CHEBI:597326"/>
    </ligand>
</feature>
<feature type="binding site" description="via persulfide group" evidence="1">
    <location>
        <position position="328"/>
    </location>
    <ligand>
        <name>[2Fe-2S] cluster</name>
        <dbReference type="ChEBI" id="CHEBI:190135"/>
        <note>ligand shared with IscU</note>
    </ligand>
</feature>
<feature type="modified residue" description="N6-(pyridoxal phosphate)lysine" evidence="1 2">
    <location>
        <position position="206"/>
    </location>
</feature>
<feature type="mutagenesis site" description="Decreased binding to CyaY." evidence="2">
    <original>R</original>
    <variation>E</variation>
    <location>
        <position position="39"/>
    </location>
</feature>
<feature type="mutagenesis site" description="No binding to TusA, decreased binding to ThiI. 3% 5-methylaminomethyl-2-thiouridine (mnm(5)s(2)U), 7% 4-thiouridine produced." evidence="2">
    <original>W</original>
    <variation>R</variation>
    <location>
        <position position="45"/>
    </location>
</feature>
<feature type="mutagenesis site" description="No binding to TusA. 24% mnm(5)s(2)U tRNA produced." evidence="2">
    <original>E</original>
    <variation>A</variation>
    <location>
        <position position="49"/>
    </location>
</feature>
<feature type="mutagenesis site" description="No binding to TusA. 0-20% mnm(5)s(2)U tRNA produced." evidence="2">
    <original>D</original>
    <variation>A</variation>
    <variation>M</variation>
    <variation>R</variation>
    <variation>Y</variation>
    <location>
        <position position="52"/>
    </location>
</feature>
<feature type="mutagenesis site" description="Decreased binding to TusA. 22% mnm(5)s(2)U tRNA produced." evidence="2">
    <original>D</original>
    <variation>F</variation>
    <location>
        <position position="65"/>
    </location>
</feature>
<feature type="mutagenesis site" description="Decreased binding to ThiI." evidence="2">
    <original>F</original>
    <variation>E</variation>
    <location>
        <position position="89"/>
    </location>
</feature>
<feature type="mutagenesis site" description="Decreased binding to IscX." evidence="2">
    <original>R</original>
    <variation>E</variation>
    <location>
        <position position="112"/>
    </location>
</feature>
<feature type="mutagenesis site" description="Decreased binding to CyaY, IscX, ThiI." evidence="2">
    <original>R</original>
    <variation>E</variation>
    <location>
        <position position="116"/>
    </location>
</feature>
<feature type="mutagenesis site" description="No binding to CyaY, IscX, ThiI." evidence="2">
    <original>R</original>
    <variation>E</variation>
    <location>
        <position position="220"/>
    </location>
</feature>
<feature type="mutagenesis site" description="No binding to IscX." evidence="2">
    <original>RVR</original>
    <variation>EVE</variation>
    <location>
        <begin position="223"/>
        <end position="225"/>
    </location>
</feature>
<feature type="mutagenesis site" description="No binding CyaY, IscX, decreased binding to ThiI." evidence="2">
    <original>R</original>
    <variation>E</variation>
    <location>
        <position position="223"/>
    </location>
</feature>
<feature type="mutagenesis site" description="No binding to CyaY, IscX." evidence="2">
    <original>RIE</original>
    <variation>EIR</variation>
    <location>
        <begin position="225"/>
        <end position="227"/>
    </location>
</feature>
<feature type="mutagenesis site" description="Decreased binding to CyaY, IscX." evidence="2">
    <original>G</original>
    <variation>L</variation>
    <location>
        <position position="234"/>
    </location>
</feature>
<feature type="mutagenesis site" description="No binding to CyaY, IscX, ThiI." evidence="2">
    <original>RGM</original>
    <variation>EGE</variation>
    <location>
        <begin position="237"/>
        <end position="239"/>
    </location>
</feature>
<feature type="mutagenesis site" description="Decreased binding to ThiI." evidence="2">
    <original>E</original>
    <variation>R</variation>
    <location>
        <position position="311"/>
    </location>
</feature>
<feature type="mutagenesis site" description="No binding to IscX, decreased binding to CyaY, IscU, ThiI." evidence="2">
    <original>A</original>
    <variation>V</variation>
    <location>
        <position position="327"/>
    </location>
</feature>
<feature type="mutagenesis site" description="Retains binding to IscU, ThiI." evidence="2">
    <original>C</original>
    <variation>S</variation>
    <location>
        <position position="328"/>
    </location>
</feature>
<feature type="mutagenesis site" description="No binding to CyaY, ThiI, decreased binding to IscX, TusA." evidence="2">
    <original>R</original>
    <variation>E</variation>
    <location>
        <position position="340"/>
    </location>
</feature>
<feature type="strand" evidence="8">
    <location>
        <begin position="3"/>
        <end position="6"/>
    </location>
</feature>
<feature type="turn" evidence="8">
    <location>
        <begin position="9"/>
        <end position="11"/>
    </location>
</feature>
<feature type="helix" evidence="8">
    <location>
        <begin position="17"/>
        <end position="23"/>
    </location>
</feature>
<feature type="strand" evidence="8">
    <location>
        <begin position="26"/>
        <end position="28"/>
    </location>
</feature>
<feature type="helix" evidence="8">
    <location>
        <begin position="42"/>
        <end position="62"/>
    </location>
</feature>
<feature type="helix" evidence="8">
    <location>
        <begin position="66"/>
        <end position="68"/>
    </location>
</feature>
<feature type="strand" evidence="8">
    <location>
        <begin position="69"/>
        <end position="74"/>
    </location>
</feature>
<feature type="helix" evidence="8">
    <location>
        <begin position="75"/>
        <end position="90"/>
    </location>
</feature>
<feature type="turn" evidence="8">
    <location>
        <begin position="91"/>
        <end position="93"/>
    </location>
</feature>
<feature type="strand" evidence="8">
    <location>
        <begin position="96"/>
        <end position="100"/>
    </location>
</feature>
<feature type="helix" evidence="8">
    <location>
        <begin position="105"/>
        <end position="116"/>
    </location>
</feature>
<feature type="strand" evidence="8">
    <location>
        <begin position="120"/>
        <end position="124"/>
    </location>
</feature>
<feature type="helix" evidence="8">
    <location>
        <begin position="134"/>
        <end position="140"/>
    </location>
</feature>
<feature type="strand" evidence="8">
    <location>
        <begin position="145"/>
        <end position="149"/>
    </location>
</feature>
<feature type="turn" evidence="8">
    <location>
        <begin position="155"/>
        <end position="157"/>
    </location>
</feature>
<feature type="helix" evidence="8">
    <location>
        <begin position="163"/>
        <end position="173"/>
    </location>
</feature>
<feature type="strand" evidence="8">
    <location>
        <begin position="176"/>
        <end position="180"/>
    </location>
</feature>
<feature type="turn" evidence="8">
    <location>
        <begin position="182"/>
        <end position="187"/>
    </location>
</feature>
<feature type="turn" evidence="8">
    <location>
        <begin position="192"/>
        <end position="194"/>
    </location>
</feature>
<feature type="strand" evidence="8">
    <location>
        <begin position="198"/>
        <end position="204"/>
    </location>
</feature>
<feature type="turn" evidence="8">
    <location>
        <begin position="205"/>
        <end position="208"/>
    </location>
</feature>
<feature type="strand" evidence="8">
    <location>
        <begin position="214"/>
        <end position="218"/>
    </location>
</feature>
<feature type="turn" evidence="8">
    <location>
        <begin position="220"/>
        <end position="223"/>
    </location>
</feature>
<feature type="turn" evidence="8">
    <location>
        <begin position="235"/>
        <end position="239"/>
    </location>
</feature>
<feature type="helix" evidence="8">
    <location>
        <begin position="246"/>
        <end position="281"/>
    </location>
</feature>
<feature type="strand" evidence="8">
    <location>
        <begin position="287"/>
        <end position="291"/>
    </location>
</feature>
<feature type="strand" evidence="6">
    <location>
        <begin position="293"/>
        <end position="296"/>
    </location>
</feature>
<feature type="strand" evidence="8">
    <location>
        <begin position="300"/>
        <end position="305"/>
    </location>
</feature>
<feature type="helix" evidence="8">
    <location>
        <begin position="310"/>
        <end position="316"/>
    </location>
</feature>
<feature type="turn" evidence="8">
    <location>
        <begin position="317"/>
        <end position="319"/>
    </location>
</feature>
<feature type="strand" evidence="7">
    <location>
        <begin position="323"/>
        <end position="325"/>
    </location>
</feature>
<feature type="helix" evidence="8">
    <location>
        <begin position="337"/>
        <end position="342"/>
    </location>
</feature>
<feature type="helix" evidence="8">
    <location>
        <begin position="346"/>
        <end position="350"/>
    </location>
</feature>
<feature type="strand" evidence="8">
    <location>
        <begin position="352"/>
        <end position="356"/>
    </location>
</feature>
<feature type="helix" evidence="8">
    <location>
        <begin position="363"/>
        <end position="381"/>
    </location>
</feature>
<feature type="helix" evidence="8">
    <location>
        <begin position="385"/>
        <end position="389"/>
    </location>
</feature>
<dbReference type="EC" id="2.8.1.7" evidence="1"/>
<dbReference type="EMBL" id="AE005174">
    <property type="protein sequence ID" value="AAG57644.1"/>
    <property type="status" value="ALT_INIT"/>
    <property type="molecule type" value="Genomic_DNA"/>
</dbReference>
<dbReference type="EMBL" id="BA000007">
    <property type="protein sequence ID" value="BAB36819.2"/>
    <property type="molecule type" value="Genomic_DNA"/>
</dbReference>
<dbReference type="RefSeq" id="NP_311423.2">
    <property type="nucleotide sequence ID" value="NC_002695.1"/>
</dbReference>
<dbReference type="RefSeq" id="WP_001295373.1">
    <property type="nucleotide sequence ID" value="NZ_VOAI01000001.1"/>
</dbReference>
<dbReference type="PDB" id="3LVJ">
    <property type="method" value="X-ray"/>
    <property type="resolution" value="2.44 A"/>
    <property type="chains" value="A/B=1-404"/>
</dbReference>
<dbReference type="PDB" id="3LVK">
    <property type="method" value="X-ray"/>
    <property type="resolution" value="2.44 A"/>
    <property type="chains" value="A=1-404"/>
</dbReference>
<dbReference type="PDB" id="3LVL">
    <property type="method" value="X-ray"/>
    <property type="resolution" value="3.00 A"/>
    <property type="chains" value="B=1-404"/>
</dbReference>
<dbReference type="PDB" id="3LVM">
    <property type="method" value="X-ray"/>
    <property type="resolution" value="2.05 A"/>
    <property type="chains" value="A/B=1-404"/>
</dbReference>
<dbReference type="PDBsum" id="3LVJ"/>
<dbReference type="PDBsum" id="3LVK"/>
<dbReference type="PDBsum" id="3LVL"/>
<dbReference type="PDBsum" id="3LVM"/>
<dbReference type="SMR" id="P0A6B9"/>
<dbReference type="DIP" id="DIP-58573N"/>
<dbReference type="IntAct" id="P0A6B9">
    <property type="interactions" value="5"/>
</dbReference>
<dbReference type="STRING" id="155864.Z3797"/>
<dbReference type="GeneID" id="915161"/>
<dbReference type="GeneID" id="93774606"/>
<dbReference type="KEGG" id="ece:Z3797"/>
<dbReference type="KEGG" id="ecs:ECs_3396"/>
<dbReference type="PATRIC" id="fig|386585.9.peg.3548"/>
<dbReference type="eggNOG" id="COG1104">
    <property type="taxonomic scope" value="Bacteria"/>
</dbReference>
<dbReference type="HOGENOM" id="CLU_003433_0_2_6"/>
<dbReference type="OMA" id="KGLYWAR"/>
<dbReference type="UniPathway" id="UPA00266"/>
<dbReference type="EvolutionaryTrace" id="P0A6B9"/>
<dbReference type="Proteomes" id="UP000000558">
    <property type="component" value="Chromosome"/>
</dbReference>
<dbReference type="Proteomes" id="UP000002519">
    <property type="component" value="Chromosome"/>
</dbReference>
<dbReference type="GO" id="GO:1990221">
    <property type="term" value="C:L-cysteine desulfurase complex"/>
    <property type="evidence" value="ECO:0007669"/>
    <property type="project" value="UniProtKB-ARBA"/>
</dbReference>
<dbReference type="GO" id="GO:0051537">
    <property type="term" value="F:2 iron, 2 sulfur cluster binding"/>
    <property type="evidence" value="ECO:0007669"/>
    <property type="project" value="UniProtKB-UniRule"/>
</dbReference>
<dbReference type="GO" id="GO:0031071">
    <property type="term" value="F:cysteine desulfurase activity"/>
    <property type="evidence" value="ECO:0007669"/>
    <property type="project" value="UniProtKB-UniRule"/>
</dbReference>
<dbReference type="GO" id="GO:0046872">
    <property type="term" value="F:metal ion binding"/>
    <property type="evidence" value="ECO:0007669"/>
    <property type="project" value="UniProtKB-KW"/>
</dbReference>
<dbReference type="GO" id="GO:0030170">
    <property type="term" value="F:pyridoxal phosphate binding"/>
    <property type="evidence" value="ECO:0007669"/>
    <property type="project" value="UniProtKB-UniRule"/>
</dbReference>
<dbReference type="GO" id="GO:0044571">
    <property type="term" value="P:[2Fe-2S] cluster assembly"/>
    <property type="evidence" value="ECO:0007669"/>
    <property type="project" value="UniProtKB-UniRule"/>
</dbReference>
<dbReference type="GO" id="GO:0008033">
    <property type="term" value="P:tRNA processing"/>
    <property type="evidence" value="ECO:0007669"/>
    <property type="project" value="UniProtKB-KW"/>
</dbReference>
<dbReference type="FunFam" id="3.40.640.10:FF:000003">
    <property type="entry name" value="Cysteine desulfurase IscS"/>
    <property type="match status" value="1"/>
</dbReference>
<dbReference type="FunFam" id="3.90.1150.10:FF:000002">
    <property type="entry name" value="Cysteine desulfurase IscS"/>
    <property type="match status" value="1"/>
</dbReference>
<dbReference type="Gene3D" id="3.90.1150.10">
    <property type="entry name" value="Aspartate Aminotransferase, domain 1"/>
    <property type="match status" value="1"/>
</dbReference>
<dbReference type="Gene3D" id="3.40.640.10">
    <property type="entry name" value="Type I PLP-dependent aspartate aminotransferase-like (Major domain)"/>
    <property type="match status" value="1"/>
</dbReference>
<dbReference type="HAMAP" id="MF_00331">
    <property type="entry name" value="Cys_desulf_IscS"/>
    <property type="match status" value="1"/>
</dbReference>
<dbReference type="InterPro" id="IPR000192">
    <property type="entry name" value="Aminotrans_V_dom"/>
</dbReference>
<dbReference type="InterPro" id="IPR020578">
    <property type="entry name" value="Aminotrans_V_PyrdxlP_BS"/>
</dbReference>
<dbReference type="InterPro" id="IPR010240">
    <property type="entry name" value="Cys_deSase_IscS"/>
</dbReference>
<dbReference type="InterPro" id="IPR016454">
    <property type="entry name" value="Cysteine_dSase"/>
</dbReference>
<dbReference type="InterPro" id="IPR015424">
    <property type="entry name" value="PyrdxlP-dep_Trfase"/>
</dbReference>
<dbReference type="InterPro" id="IPR015421">
    <property type="entry name" value="PyrdxlP-dep_Trfase_major"/>
</dbReference>
<dbReference type="InterPro" id="IPR015422">
    <property type="entry name" value="PyrdxlP-dep_Trfase_small"/>
</dbReference>
<dbReference type="NCBIfam" id="TIGR02006">
    <property type="entry name" value="IscS"/>
    <property type="match status" value="1"/>
</dbReference>
<dbReference type="NCBIfam" id="NF002806">
    <property type="entry name" value="PRK02948.1"/>
    <property type="match status" value="1"/>
</dbReference>
<dbReference type="NCBIfam" id="NF010611">
    <property type="entry name" value="PRK14012.1"/>
    <property type="match status" value="1"/>
</dbReference>
<dbReference type="PANTHER" id="PTHR11601:SF34">
    <property type="entry name" value="CYSTEINE DESULFURASE"/>
    <property type="match status" value="1"/>
</dbReference>
<dbReference type="PANTHER" id="PTHR11601">
    <property type="entry name" value="CYSTEINE DESULFURYLASE FAMILY MEMBER"/>
    <property type="match status" value="1"/>
</dbReference>
<dbReference type="Pfam" id="PF00266">
    <property type="entry name" value="Aminotran_5"/>
    <property type="match status" value="1"/>
</dbReference>
<dbReference type="PIRSF" id="PIRSF005572">
    <property type="entry name" value="NifS"/>
    <property type="match status" value="1"/>
</dbReference>
<dbReference type="SUPFAM" id="SSF53383">
    <property type="entry name" value="PLP-dependent transferases"/>
    <property type="match status" value="1"/>
</dbReference>
<dbReference type="PROSITE" id="PS00595">
    <property type="entry name" value="AA_TRANSFER_CLASS_5"/>
    <property type="match status" value="1"/>
</dbReference>
<protein>
    <recommendedName>
        <fullName evidence="1 3">Cysteine desulfurase IscS</fullName>
        <ecNumber evidence="1">2.8.1.7</ecNumber>
    </recommendedName>
</protein>